<reference key="1">
    <citation type="journal article" date="2002" name="Nature">
        <title>The genome sequence of Schizosaccharomyces pombe.</title>
        <authorList>
            <person name="Wood V."/>
            <person name="Gwilliam R."/>
            <person name="Rajandream M.A."/>
            <person name="Lyne M.H."/>
            <person name="Lyne R."/>
            <person name="Stewart A."/>
            <person name="Sgouros J.G."/>
            <person name="Peat N."/>
            <person name="Hayles J."/>
            <person name="Baker S.G."/>
            <person name="Basham D."/>
            <person name="Bowman S."/>
            <person name="Brooks K."/>
            <person name="Brown D."/>
            <person name="Brown S."/>
            <person name="Chillingworth T."/>
            <person name="Churcher C.M."/>
            <person name="Collins M."/>
            <person name="Connor R."/>
            <person name="Cronin A."/>
            <person name="Davis P."/>
            <person name="Feltwell T."/>
            <person name="Fraser A."/>
            <person name="Gentles S."/>
            <person name="Goble A."/>
            <person name="Hamlin N."/>
            <person name="Harris D.E."/>
            <person name="Hidalgo J."/>
            <person name="Hodgson G."/>
            <person name="Holroyd S."/>
            <person name="Hornsby T."/>
            <person name="Howarth S."/>
            <person name="Huckle E.J."/>
            <person name="Hunt S."/>
            <person name="Jagels K."/>
            <person name="James K.D."/>
            <person name="Jones L."/>
            <person name="Jones M."/>
            <person name="Leather S."/>
            <person name="McDonald S."/>
            <person name="McLean J."/>
            <person name="Mooney P."/>
            <person name="Moule S."/>
            <person name="Mungall K.L."/>
            <person name="Murphy L.D."/>
            <person name="Niblett D."/>
            <person name="Odell C."/>
            <person name="Oliver K."/>
            <person name="O'Neil S."/>
            <person name="Pearson D."/>
            <person name="Quail M.A."/>
            <person name="Rabbinowitsch E."/>
            <person name="Rutherford K.M."/>
            <person name="Rutter S."/>
            <person name="Saunders D."/>
            <person name="Seeger K."/>
            <person name="Sharp S."/>
            <person name="Skelton J."/>
            <person name="Simmonds M.N."/>
            <person name="Squares R."/>
            <person name="Squares S."/>
            <person name="Stevens K."/>
            <person name="Taylor K."/>
            <person name="Taylor R.G."/>
            <person name="Tivey A."/>
            <person name="Walsh S.V."/>
            <person name="Warren T."/>
            <person name="Whitehead S."/>
            <person name="Woodward J.R."/>
            <person name="Volckaert G."/>
            <person name="Aert R."/>
            <person name="Robben J."/>
            <person name="Grymonprez B."/>
            <person name="Weltjens I."/>
            <person name="Vanstreels E."/>
            <person name="Rieger M."/>
            <person name="Schaefer M."/>
            <person name="Mueller-Auer S."/>
            <person name="Gabel C."/>
            <person name="Fuchs M."/>
            <person name="Duesterhoeft A."/>
            <person name="Fritzc C."/>
            <person name="Holzer E."/>
            <person name="Moestl D."/>
            <person name="Hilbert H."/>
            <person name="Borzym K."/>
            <person name="Langer I."/>
            <person name="Beck A."/>
            <person name="Lehrach H."/>
            <person name="Reinhardt R."/>
            <person name="Pohl T.M."/>
            <person name="Eger P."/>
            <person name="Zimmermann W."/>
            <person name="Wedler H."/>
            <person name="Wambutt R."/>
            <person name="Purnelle B."/>
            <person name="Goffeau A."/>
            <person name="Cadieu E."/>
            <person name="Dreano S."/>
            <person name="Gloux S."/>
            <person name="Lelaure V."/>
            <person name="Mottier S."/>
            <person name="Galibert F."/>
            <person name="Aves S.J."/>
            <person name="Xiang Z."/>
            <person name="Hunt C."/>
            <person name="Moore K."/>
            <person name="Hurst S.M."/>
            <person name="Lucas M."/>
            <person name="Rochet M."/>
            <person name="Gaillardin C."/>
            <person name="Tallada V.A."/>
            <person name="Garzon A."/>
            <person name="Thode G."/>
            <person name="Daga R.R."/>
            <person name="Cruzado L."/>
            <person name="Jimenez J."/>
            <person name="Sanchez M."/>
            <person name="del Rey F."/>
            <person name="Benito J."/>
            <person name="Dominguez A."/>
            <person name="Revuelta J.L."/>
            <person name="Moreno S."/>
            <person name="Armstrong J."/>
            <person name="Forsburg S.L."/>
            <person name="Cerutti L."/>
            <person name="Lowe T."/>
            <person name="McCombie W.R."/>
            <person name="Paulsen I."/>
            <person name="Potashkin J."/>
            <person name="Shpakovski G.V."/>
            <person name="Ussery D."/>
            <person name="Barrell B.G."/>
            <person name="Nurse P."/>
        </authorList>
    </citation>
    <scope>NUCLEOTIDE SEQUENCE [LARGE SCALE GENOMIC DNA]</scope>
    <source>
        <strain>972 / ATCC 24843</strain>
    </source>
</reference>
<reference key="2">
    <citation type="journal article" date="2006" name="Nat. Biotechnol.">
        <title>ORFeome cloning and global analysis of protein localization in the fission yeast Schizosaccharomyces pombe.</title>
        <authorList>
            <person name="Matsuyama A."/>
            <person name="Arai R."/>
            <person name="Yashiroda Y."/>
            <person name="Shirai A."/>
            <person name="Kamata A."/>
            <person name="Sekido S."/>
            <person name="Kobayashi Y."/>
            <person name="Hashimoto A."/>
            <person name="Hamamoto M."/>
            <person name="Hiraoka Y."/>
            <person name="Horinouchi S."/>
            <person name="Yoshida M."/>
        </authorList>
    </citation>
    <scope>SUBCELLULAR LOCATION [LARGE SCALE ANALYSIS]</scope>
</reference>
<accession>Q9C0V7</accession>
<keyword id="KW-0106">Calcium</keyword>
<keyword id="KW-0963">Cytoplasm</keyword>
<keyword id="KW-0378">Hydrolase</keyword>
<keyword id="KW-0479">Metal-binding</keyword>
<keyword id="KW-0539">Nucleus</keyword>
<keyword id="KW-1185">Reference proteome</keyword>
<name>YHJ2_SCHPO</name>
<feature type="chain" id="PRO_0000316607" description="Uncharacterized sulfatase PB10D8.02c">
    <location>
        <begin position="1"/>
        <end position="554"/>
    </location>
</feature>
<feature type="binding site" evidence="1">
    <location>
        <position position="327"/>
    </location>
    <ligand>
        <name>Ca(2+)</name>
        <dbReference type="ChEBI" id="CHEBI:29108"/>
    </ligand>
</feature>
<feature type="binding site" evidence="1">
    <location>
        <position position="328"/>
    </location>
    <ligand>
        <name>Ca(2+)</name>
        <dbReference type="ChEBI" id="CHEBI:29108"/>
    </ligand>
</feature>
<proteinExistence type="inferred from homology"/>
<comment type="cofactor">
    <cofactor evidence="1">
        <name>Ca(2+)</name>
        <dbReference type="ChEBI" id="CHEBI:29108"/>
    </cofactor>
    <text evidence="1">Binds 1 Ca(2+) ion per subunit.</text>
</comment>
<comment type="subcellular location">
    <subcellularLocation>
        <location evidence="2">Cytoplasm</location>
    </subcellularLocation>
    <subcellularLocation>
        <location evidence="2">Nucleus</location>
    </subcellularLocation>
</comment>
<comment type="similarity">
    <text evidence="3">Belongs to the sulfatase family.</text>
</comment>
<dbReference type="EC" id="3.1.6.-"/>
<dbReference type="EMBL" id="CU329671">
    <property type="protein sequence ID" value="CAC36911.1"/>
    <property type="molecule type" value="Genomic_DNA"/>
</dbReference>
<dbReference type="RefSeq" id="NP_595046.1">
    <property type="nucleotide sequence ID" value="NM_001020951.2"/>
</dbReference>
<dbReference type="SMR" id="Q9C0V7"/>
<dbReference type="BioGRID" id="277905">
    <property type="interactions" value="169"/>
</dbReference>
<dbReference type="FunCoup" id="Q9C0V7">
    <property type="interactions" value="2"/>
</dbReference>
<dbReference type="STRING" id="284812.Q9C0V7"/>
<dbReference type="iPTMnet" id="Q9C0V7"/>
<dbReference type="PaxDb" id="4896-SPBPB10D8.02c.1"/>
<dbReference type="EnsemblFungi" id="SPBPB10D8.02c.1">
    <property type="protein sequence ID" value="SPBPB10D8.02c.1:pep"/>
    <property type="gene ID" value="SPBPB10D8.02c"/>
</dbReference>
<dbReference type="KEGG" id="spo:2541396"/>
<dbReference type="PomBase" id="SPBPB10D8.02c"/>
<dbReference type="VEuPathDB" id="FungiDB:SPBPB10D8.02c"/>
<dbReference type="eggNOG" id="KOG3867">
    <property type="taxonomic scope" value="Eukaryota"/>
</dbReference>
<dbReference type="HOGENOM" id="CLU_006332_11_1_1"/>
<dbReference type="InParanoid" id="Q9C0V7"/>
<dbReference type="OMA" id="YSDQWAQ"/>
<dbReference type="PhylomeDB" id="Q9C0V7"/>
<dbReference type="Reactome" id="R-SPO-196071">
    <property type="pathway name" value="Metabolism of steroid hormones"/>
</dbReference>
<dbReference type="Reactome" id="R-SPO-2022857">
    <property type="pathway name" value="Keratan sulfate degradation"/>
</dbReference>
<dbReference type="Reactome" id="R-SPO-6798695">
    <property type="pathway name" value="Neutrophil degranulation"/>
</dbReference>
<dbReference type="Reactome" id="R-SPO-9840310">
    <property type="pathway name" value="Glycosphingolipid catabolism"/>
</dbReference>
<dbReference type="PRO" id="PR:Q9C0V7"/>
<dbReference type="Proteomes" id="UP000002485">
    <property type="component" value="Chromosome II"/>
</dbReference>
<dbReference type="GO" id="GO:0005829">
    <property type="term" value="C:cytosol"/>
    <property type="evidence" value="ECO:0007005"/>
    <property type="project" value="PomBase"/>
</dbReference>
<dbReference type="GO" id="GO:0005634">
    <property type="term" value="C:nucleus"/>
    <property type="evidence" value="ECO:0007005"/>
    <property type="project" value="PomBase"/>
</dbReference>
<dbReference type="GO" id="GO:0004065">
    <property type="term" value="F:arylsulfatase activity"/>
    <property type="evidence" value="ECO:0000318"/>
    <property type="project" value="GO_Central"/>
</dbReference>
<dbReference type="GO" id="GO:0046872">
    <property type="term" value="F:metal ion binding"/>
    <property type="evidence" value="ECO:0007669"/>
    <property type="project" value="UniProtKB-KW"/>
</dbReference>
<dbReference type="CDD" id="cd16025">
    <property type="entry name" value="PAS_like"/>
    <property type="match status" value="1"/>
</dbReference>
<dbReference type="FunFam" id="3.40.720.10:FF:000044">
    <property type="entry name" value="Arylsulfatase"/>
    <property type="match status" value="1"/>
</dbReference>
<dbReference type="Gene3D" id="3.30.1120.10">
    <property type="match status" value="1"/>
</dbReference>
<dbReference type="Gene3D" id="3.40.720.10">
    <property type="entry name" value="Alkaline Phosphatase, subunit A"/>
    <property type="match status" value="1"/>
</dbReference>
<dbReference type="InterPro" id="IPR017850">
    <property type="entry name" value="Alkaline_phosphatase_core_sf"/>
</dbReference>
<dbReference type="InterPro" id="IPR050738">
    <property type="entry name" value="Sulfatase"/>
</dbReference>
<dbReference type="InterPro" id="IPR024607">
    <property type="entry name" value="Sulfatase_CS"/>
</dbReference>
<dbReference type="InterPro" id="IPR000917">
    <property type="entry name" value="Sulfatase_N"/>
</dbReference>
<dbReference type="PANTHER" id="PTHR42693:SF33">
    <property type="entry name" value="ARYLSULFATASE"/>
    <property type="match status" value="1"/>
</dbReference>
<dbReference type="PANTHER" id="PTHR42693">
    <property type="entry name" value="ARYLSULFATASE FAMILY MEMBER"/>
    <property type="match status" value="1"/>
</dbReference>
<dbReference type="Pfam" id="PF00884">
    <property type="entry name" value="Sulfatase"/>
    <property type="match status" value="1"/>
</dbReference>
<dbReference type="SUPFAM" id="SSF53649">
    <property type="entry name" value="Alkaline phosphatase-like"/>
    <property type="match status" value="1"/>
</dbReference>
<dbReference type="PROSITE" id="PS00149">
    <property type="entry name" value="SULFATASE_2"/>
    <property type="match status" value="1"/>
</dbReference>
<sequence>MAFNKQAESKKPNFLVIVADDLGWSDVSPFGSEIHTPNIERLAKEGVRLTNFHTASACSPTRSMLLSGTDNHIAGLGQMAETVRRFSKVWGGKPGYEGYLNDRVAALPEILQEAGYYTTMSGKWHLGLTPDRYPSKRGFKESFALLPGGGNHFAYEPGTRENPAVPFLPPLYTHNHDPVDHKSLKNFYSSNYFAEKLIDQLKNREKSQSFFAYLPFTAPHWPLQSPKEYINKYRGRYSEGPDVLRKNRLQAQKDLGLIPENVIPAPVDGMGTKSWDELTTEEKEFSARTMEVYAAMVELLDLNIGRVIDYLKTIGELDNTFVIFMSDNGAEGSVLEAIPVLSTKPPVKYFDNSLENLGNYNSFIWYGPRWAQAATAPSRLSKGFITEGGIRCPAIIRYPPLIKPDIISDEFVTVMDILPTILELAEVPHPGHKFQGRDVVIPRGKPWIDHFVHGKPVHKDTDFSGWELFGQRAIRKGNYKAIYVPKEGIKTEWELYDLSQDKGELENLAKVHPDILNELIEYWLVYEAETGVVTAPDDFVAENVGLFKPAKHNL</sequence>
<gene>
    <name type="ORF">SPBPB10D8.02c</name>
</gene>
<organism>
    <name type="scientific">Schizosaccharomyces pombe (strain 972 / ATCC 24843)</name>
    <name type="common">Fission yeast</name>
    <dbReference type="NCBI Taxonomy" id="284812"/>
    <lineage>
        <taxon>Eukaryota</taxon>
        <taxon>Fungi</taxon>
        <taxon>Dikarya</taxon>
        <taxon>Ascomycota</taxon>
        <taxon>Taphrinomycotina</taxon>
        <taxon>Schizosaccharomycetes</taxon>
        <taxon>Schizosaccharomycetales</taxon>
        <taxon>Schizosaccharomycetaceae</taxon>
        <taxon>Schizosaccharomyces</taxon>
    </lineage>
</organism>
<protein>
    <recommendedName>
        <fullName>Uncharacterized sulfatase PB10D8.02c</fullName>
        <ecNumber>3.1.6.-</ecNumber>
    </recommendedName>
</protein>
<evidence type="ECO:0000250" key="1"/>
<evidence type="ECO:0000269" key="2">
    <source>
    </source>
</evidence>
<evidence type="ECO:0000305" key="3"/>